<comment type="function">
    <text evidence="1">Catalyzes the NADPH-dependent reduction of L-glutamate 5-phosphate into L-glutamate 5-semialdehyde and phosphate. The product spontaneously undergoes cyclization to form 1-pyrroline-5-carboxylate.</text>
</comment>
<comment type="catalytic activity">
    <reaction evidence="1">
        <text>L-glutamate 5-semialdehyde + phosphate + NADP(+) = L-glutamyl 5-phosphate + NADPH + H(+)</text>
        <dbReference type="Rhea" id="RHEA:19541"/>
        <dbReference type="ChEBI" id="CHEBI:15378"/>
        <dbReference type="ChEBI" id="CHEBI:43474"/>
        <dbReference type="ChEBI" id="CHEBI:57783"/>
        <dbReference type="ChEBI" id="CHEBI:58066"/>
        <dbReference type="ChEBI" id="CHEBI:58274"/>
        <dbReference type="ChEBI" id="CHEBI:58349"/>
        <dbReference type="EC" id="1.2.1.41"/>
    </reaction>
</comment>
<comment type="pathway">
    <text evidence="1">Amino-acid biosynthesis; L-proline biosynthesis; L-glutamate 5-semialdehyde from L-glutamate: step 2/2.</text>
</comment>
<comment type="subcellular location">
    <subcellularLocation>
        <location evidence="1">Cytoplasm</location>
    </subcellularLocation>
</comment>
<comment type="similarity">
    <text evidence="1">Belongs to the gamma-glutamyl phosphate reductase family.</text>
</comment>
<organism>
    <name type="scientific">Pseudomonas putida (strain GB-1)</name>
    <dbReference type="NCBI Taxonomy" id="76869"/>
    <lineage>
        <taxon>Bacteria</taxon>
        <taxon>Pseudomonadati</taxon>
        <taxon>Pseudomonadota</taxon>
        <taxon>Gammaproteobacteria</taxon>
        <taxon>Pseudomonadales</taxon>
        <taxon>Pseudomonadaceae</taxon>
        <taxon>Pseudomonas</taxon>
    </lineage>
</organism>
<evidence type="ECO:0000255" key="1">
    <source>
        <dbReference type="HAMAP-Rule" id="MF_00412"/>
    </source>
</evidence>
<feature type="chain" id="PRO_1000080489" description="Gamma-glutamyl phosphate reductase">
    <location>
        <begin position="1"/>
        <end position="423"/>
    </location>
</feature>
<protein>
    <recommendedName>
        <fullName evidence="1">Gamma-glutamyl phosphate reductase</fullName>
        <shortName evidence="1">GPR</shortName>
        <ecNumber evidence="1">1.2.1.41</ecNumber>
    </recommendedName>
    <alternativeName>
        <fullName evidence="1">Glutamate-5-semialdehyde dehydrogenase</fullName>
    </alternativeName>
    <alternativeName>
        <fullName evidence="1">Glutamyl-gamma-semialdehyde dehydrogenase</fullName>
        <shortName evidence="1">GSA dehydrogenase</shortName>
    </alternativeName>
</protein>
<name>PROA_PSEPG</name>
<accession>B0KJY5</accession>
<dbReference type="EC" id="1.2.1.41" evidence="1"/>
<dbReference type="EMBL" id="CP000926">
    <property type="protein sequence ID" value="ABZ00749.1"/>
    <property type="molecule type" value="Genomic_DNA"/>
</dbReference>
<dbReference type="RefSeq" id="WP_012274380.1">
    <property type="nucleotide sequence ID" value="NC_010322.1"/>
</dbReference>
<dbReference type="SMR" id="B0KJY5"/>
<dbReference type="KEGG" id="ppg:PputGB1_4864"/>
<dbReference type="eggNOG" id="COG0014">
    <property type="taxonomic scope" value="Bacteria"/>
</dbReference>
<dbReference type="HOGENOM" id="CLU_030231_0_0_6"/>
<dbReference type="UniPathway" id="UPA00098">
    <property type="reaction ID" value="UER00360"/>
</dbReference>
<dbReference type="Proteomes" id="UP000002157">
    <property type="component" value="Chromosome"/>
</dbReference>
<dbReference type="GO" id="GO:0005737">
    <property type="term" value="C:cytoplasm"/>
    <property type="evidence" value="ECO:0007669"/>
    <property type="project" value="UniProtKB-SubCell"/>
</dbReference>
<dbReference type="GO" id="GO:0004350">
    <property type="term" value="F:glutamate-5-semialdehyde dehydrogenase activity"/>
    <property type="evidence" value="ECO:0007669"/>
    <property type="project" value="UniProtKB-UniRule"/>
</dbReference>
<dbReference type="GO" id="GO:0050661">
    <property type="term" value="F:NADP binding"/>
    <property type="evidence" value="ECO:0007669"/>
    <property type="project" value="InterPro"/>
</dbReference>
<dbReference type="GO" id="GO:0055129">
    <property type="term" value="P:L-proline biosynthetic process"/>
    <property type="evidence" value="ECO:0007669"/>
    <property type="project" value="UniProtKB-UniRule"/>
</dbReference>
<dbReference type="CDD" id="cd07079">
    <property type="entry name" value="ALDH_F18-19_ProA-GPR"/>
    <property type="match status" value="1"/>
</dbReference>
<dbReference type="FunFam" id="3.40.309.10:FF:000006">
    <property type="entry name" value="Gamma-glutamyl phosphate reductase"/>
    <property type="match status" value="1"/>
</dbReference>
<dbReference type="Gene3D" id="3.40.605.10">
    <property type="entry name" value="Aldehyde Dehydrogenase, Chain A, domain 1"/>
    <property type="match status" value="1"/>
</dbReference>
<dbReference type="Gene3D" id="3.40.309.10">
    <property type="entry name" value="Aldehyde Dehydrogenase, Chain A, domain 2"/>
    <property type="match status" value="1"/>
</dbReference>
<dbReference type="HAMAP" id="MF_00412">
    <property type="entry name" value="ProA"/>
    <property type="match status" value="1"/>
</dbReference>
<dbReference type="InterPro" id="IPR016161">
    <property type="entry name" value="Ald_DH/histidinol_DH"/>
</dbReference>
<dbReference type="InterPro" id="IPR016163">
    <property type="entry name" value="Ald_DH_C"/>
</dbReference>
<dbReference type="InterPro" id="IPR016162">
    <property type="entry name" value="Ald_DH_N"/>
</dbReference>
<dbReference type="InterPro" id="IPR015590">
    <property type="entry name" value="Aldehyde_DH_dom"/>
</dbReference>
<dbReference type="InterPro" id="IPR020593">
    <property type="entry name" value="G-glutamylP_reductase_CS"/>
</dbReference>
<dbReference type="InterPro" id="IPR012134">
    <property type="entry name" value="Glu-5-SA_DH"/>
</dbReference>
<dbReference type="InterPro" id="IPR000965">
    <property type="entry name" value="GPR_dom"/>
</dbReference>
<dbReference type="NCBIfam" id="NF001221">
    <property type="entry name" value="PRK00197.1"/>
    <property type="match status" value="1"/>
</dbReference>
<dbReference type="NCBIfam" id="TIGR00407">
    <property type="entry name" value="proA"/>
    <property type="match status" value="1"/>
</dbReference>
<dbReference type="PANTHER" id="PTHR11063:SF8">
    <property type="entry name" value="DELTA-1-PYRROLINE-5-CARBOXYLATE SYNTHASE"/>
    <property type="match status" value="1"/>
</dbReference>
<dbReference type="PANTHER" id="PTHR11063">
    <property type="entry name" value="GLUTAMATE SEMIALDEHYDE DEHYDROGENASE"/>
    <property type="match status" value="1"/>
</dbReference>
<dbReference type="Pfam" id="PF00171">
    <property type="entry name" value="Aldedh"/>
    <property type="match status" value="1"/>
</dbReference>
<dbReference type="PIRSF" id="PIRSF000151">
    <property type="entry name" value="GPR"/>
    <property type="match status" value="1"/>
</dbReference>
<dbReference type="SUPFAM" id="SSF53720">
    <property type="entry name" value="ALDH-like"/>
    <property type="match status" value="1"/>
</dbReference>
<dbReference type="PROSITE" id="PS01223">
    <property type="entry name" value="PROA"/>
    <property type="match status" value="1"/>
</dbReference>
<reference key="1">
    <citation type="submission" date="2008-01" db="EMBL/GenBank/DDBJ databases">
        <title>Complete sequence of Pseudomonas putida GB-1.</title>
        <authorList>
            <consortium name="US DOE Joint Genome Institute"/>
            <person name="Copeland A."/>
            <person name="Lucas S."/>
            <person name="Lapidus A."/>
            <person name="Barry K."/>
            <person name="Glavina del Rio T."/>
            <person name="Dalin E."/>
            <person name="Tice H."/>
            <person name="Pitluck S."/>
            <person name="Bruce D."/>
            <person name="Goodwin L."/>
            <person name="Chertkov O."/>
            <person name="Brettin T."/>
            <person name="Detter J.C."/>
            <person name="Han C."/>
            <person name="Kuske C.R."/>
            <person name="Schmutz J."/>
            <person name="Larimer F."/>
            <person name="Land M."/>
            <person name="Hauser L."/>
            <person name="Kyrpides N."/>
            <person name="Kim E."/>
            <person name="McCarthy J.K."/>
            <person name="Richardson P."/>
        </authorList>
    </citation>
    <scope>NUCLEOTIDE SEQUENCE [LARGE SCALE GENOMIC DNA]</scope>
    <source>
        <strain>GB-1</strain>
    </source>
</reference>
<sequence length="423" mass="45601">MTESVLDYMTRLGRAAREASRVIGRASTAQKNRALQAAADALDAARAELTAANELDLAAGRANGLEPALLDRLALTPARIDGMITGLRQVASLPDPVGAIRDMSYRPSGIQVGKMRTPLGVIGIIYESRPNVTIDAASLCLKSGNATILRGGSEAIHSNRAIATCIQRGLAEAGLPAAVVQVVETTDREAVGALISMPQFVDVIVPRGGRGLIERISRDARVPVIKHLDGICHVYVSQHADLDKAWNVAFNAKTYRYGICGAMETLLVDQRVAERFLPEMARRFQEKGVELRGCERTRALVEAKPATEDDWHTEYLDAILSIRVVNGLDQAIEHINHYGSHHTDSIISEHQGEARQFMAEVDSASVMLNTPTCFADGFEYGLGAEIGISTDKLHARGPVGLEGLTCEKYVVIGDGQLRGQGTC</sequence>
<gene>
    <name evidence="1" type="primary">proA</name>
    <name type="ordered locus">PputGB1_4864</name>
</gene>
<keyword id="KW-0028">Amino-acid biosynthesis</keyword>
<keyword id="KW-0963">Cytoplasm</keyword>
<keyword id="KW-0521">NADP</keyword>
<keyword id="KW-0560">Oxidoreductase</keyword>
<keyword id="KW-0641">Proline biosynthesis</keyword>
<proteinExistence type="inferred from homology"/>